<organism>
    <name type="scientific">Mycobacterium marinum (strain ATCC BAA-535 / M)</name>
    <dbReference type="NCBI Taxonomy" id="216594"/>
    <lineage>
        <taxon>Bacteria</taxon>
        <taxon>Bacillati</taxon>
        <taxon>Actinomycetota</taxon>
        <taxon>Actinomycetes</taxon>
        <taxon>Mycobacteriales</taxon>
        <taxon>Mycobacteriaceae</taxon>
        <taxon>Mycobacterium</taxon>
        <taxon>Mycobacterium ulcerans group</taxon>
    </lineage>
</organism>
<accession>B2HCU3</accession>
<reference key="1">
    <citation type="journal article" date="2008" name="Genome Res.">
        <title>Insights from the complete genome sequence of Mycobacterium marinum on the evolution of Mycobacterium tuberculosis.</title>
        <authorList>
            <person name="Stinear T.P."/>
            <person name="Seemann T."/>
            <person name="Harrison P.F."/>
            <person name="Jenkin G.A."/>
            <person name="Davies J.K."/>
            <person name="Johnson P.D."/>
            <person name="Abdellah Z."/>
            <person name="Arrowsmith C."/>
            <person name="Chillingworth T."/>
            <person name="Churcher C."/>
            <person name="Clarke K."/>
            <person name="Cronin A."/>
            <person name="Davis P."/>
            <person name="Goodhead I."/>
            <person name="Holroyd N."/>
            <person name="Jagels K."/>
            <person name="Lord A."/>
            <person name="Moule S."/>
            <person name="Mungall K."/>
            <person name="Norbertczak H."/>
            <person name="Quail M.A."/>
            <person name="Rabbinowitsch E."/>
            <person name="Walker D."/>
            <person name="White B."/>
            <person name="Whitehead S."/>
            <person name="Small P.L."/>
            <person name="Brosch R."/>
            <person name="Ramakrishnan L."/>
            <person name="Fischbach M.A."/>
            <person name="Parkhill J."/>
            <person name="Cole S.T."/>
        </authorList>
    </citation>
    <scope>NUCLEOTIDE SEQUENCE [LARGE SCALE GENOMIC DNA]</scope>
    <source>
        <strain>ATCC BAA-535 / M</strain>
    </source>
</reference>
<gene>
    <name type="ordered locus">MMAR_1057</name>
</gene>
<dbReference type="EC" id="2.1.1.-"/>
<dbReference type="EMBL" id="CP000854">
    <property type="protein sequence ID" value="ACC39515.1"/>
    <property type="molecule type" value="Genomic_DNA"/>
</dbReference>
<dbReference type="RefSeq" id="WP_012392955.1">
    <property type="nucleotide sequence ID" value="NC_010612.1"/>
</dbReference>
<dbReference type="SMR" id="B2HCU3"/>
<dbReference type="STRING" id="216594.MMAR_1057"/>
<dbReference type="KEGG" id="mmi:MMAR_1057"/>
<dbReference type="eggNOG" id="COG3315">
    <property type="taxonomic scope" value="Bacteria"/>
</dbReference>
<dbReference type="HOGENOM" id="CLU_056160_2_1_11"/>
<dbReference type="OrthoDB" id="9806164at2"/>
<dbReference type="Proteomes" id="UP000001190">
    <property type="component" value="Chromosome"/>
</dbReference>
<dbReference type="GO" id="GO:0008168">
    <property type="term" value="F:methyltransferase activity"/>
    <property type="evidence" value="ECO:0007669"/>
    <property type="project" value="UniProtKB-KW"/>
</dbReference>
<dbReference type="GO" id="GO:0032259">
    <property type="term" value="P:methylation"/>
    <property type="evidence" value="ECO:0007669"/>
    <property type="project" value="UniProtKB-KW"/>
</dbReference>
<dbReference type="FunFam" id="3.40.50.150:FF:000152">
    <property type="entry name" value="S-adenosyl-L-methionine-dependent methyltransferase"/>
    <property type="match status" value="1"/>
</dbReference>
<dbReference type="Gene3D" id="3.40.50.150">
    <property type="entry name" value="Vaccinia Virus protein VP39"/>
    <property type="match status" value="1"/>
</dbReference>
<dbReference type="InterPro" id="IPR007213">
    <property type="entry name" value="Ppm1/Ppm2/Tcmp"/>
</dbReference>
<dbReference type="InterPro" id="IPR029063">
    <property type="entry name" value="SAM-dependent_MTases_sf"/>
</dbReference>
<dbReference type="InterPro" id="IPR011610">
    <property type="entry name" value="SAM_mthyl_Trfase_ML2640-like"/>
</dbReference>
<dbReference type="NCBIfam" id="TIGR00027">
    <property type="entry name" value="mthyl_TIGR00027"/>
    <property type="match status" value="1"/>
</dbReference>
<dbReference type="PANTHER" id="PTHR43619">
    <property type="entry name" value="S-ADENOSYL-L-METHIONINE-DEPENDENT METHYLTRANSFERASE YKTD-RELATED"/>
    <property type="match status" value="1"/>
</dbReference>
<dbReference type="PANTHER" id="PTHR43619:SF2">
    <property type="entry name" value="S-ADENOSYL-L-METHIONINE-DEPENDENT METHYLTRANSFERASES SUPERFAMILY PROTEIN"/>
    <property type="match status" value="1"/>
</dbReference>
<dbReference type="Pfam" id="PF04072">
    <property type="entry name" value="LCM"/>
    <property type="match status" value="1"/>
</dbReference>
<dbReference type="SUPFAM" id="SSF53335">
    <property type="entry name" value="S-adenosyl-L-methionine-dependent methyltransferases"/>
    <property type="match status" value="1"/>
</dbReference>
<name>Y1057_MYCMM</name>
<sequence>MARTHDDKWDLASSVGATATMVAAGRAMASRDPRGLIDDPFAEPLVRAVGVDFFIKMMDGEFDLSVLQNVSSAKAQAMVDGMAVRTKYFDDYFGDAIKSGIRQAVILASGLDARAYRLPWPADTVVYELDQPQVIEFKTNVLADLGAEPRATRRAIPIDLRGDWPVALRAAGLDTTAPTAWLAEGLLIYLPPEAQDRLFDNITALSAPGSTVATEFVPGIVDFDVDRARQMSGPFRDHGLDIDMSSLVYTGARNHVVDYLRAKGWDAEGVTRSELFERNGMAVPAPSDDDPLGEIIFISAALTG</sequence>
<evidence type="ECO:0000250" key="1"/>
<evidence type="ECO:0000305" key="2"/>
<feature type="chain" id="PRO_0000361160" description="Putative S-adenosyl-L-methionine-dependent methyltransferase MMAR_1057">
    <location>
        <begin position="1"/>
        <end position="304"/>
    </location>
</feature>
<feature type="binding site" evidence="1">
    <location>
        <position position="130"/>
    </location>
    <ligand>
        <name>S-adenosyl-L-methionine</name>
        <dbReference type="ChEBI" id="CHEBI:59789"/>
    </ligand>
</feature>
<feature type="binding site" evidence="1">
    <location>
        <begin position="159"/>
        <end position="160"/>
    </location>
    <ligand>
        <name>S-adenosyl-L-methionine</name>
        <dbReference type="ChEBI" id="CHEBI:59789"/>
    </ligand>
</feature>
<protein>
    <recommendedName>
        <fullName>Putative S-adenosyl-L-methionine-dependent methyltransferase MMAR_1057</fullName>
        <ecNumber>2.1.1.-</ecNumber>
    </recommendedName>
</protein>
<comment type="function">
    <text evidence="1">Exhibits S-adenosyl-L-methionine-dependent methyltransferase activity.</text>
</comment>
<comment type="similarity">
    <text evidence="2">Belongs to the UPF0677 family.</text>
</comment>
<proteinExistence type="inferred from homology"/>
<keyword id="KW-0489">Methyltransferase</keyword>
<keyword id="KW-1185">Reference proteome</keyword>
<keyword id="KW-0949">S-adenosyl-L-methionine</keyword>
<keyword id="KW-0808">Transferase</keyword>